<organism>
    <name type="scientific">Shewanella pealeana (strain ATCC 700345 / ANG-SQ1)</name>
    <dbReference type="NCBI Taxonomy" id="398579"/>
    <lineage>
        <taxon>Bacteria</taxon>
        <taxon>Pseudomonadati</taxon>
        <taxon>Pseudomonadota</taxon>
        <taxon>Gammaproteobacteria</taxon>
        <taxon>Alteromonadales</taxon>
        <taxon>Shewanellaceae</taxon>
        <taxon>Shewanella</taxon>
    </lineage>
</organism>
<evidence type="ECO:0000255" key="1">
    <source>
        <dbReference type="HAMAP-Rule" id="MF_02016"/>
    </source>
</evidence>
<evidence type="ECO:0000256" key="2">
    <source>
        <dbReference type="SAM" id="MobiDB-lite"/>
    </source>
</evidence>
<proteinExistence type="inferred from homology"/>
<comment type="function">
    <text evidence="1">Murein-degrading enzyme that degrades murein glycan strands and insoluble, high-molecular weight murein sacculi, with the concomitant formation of a 1,6-anhydromuramoyl product. Lytic transglycosylases (LTs) play an integral role in the metabolism of the peptidoglycan (PG) sacculus. Their lytic action creates space within the PG sacculus to allow for its expansion as well as for the insertion of various structures such as secretion systems and flagella.</text>
</comment>
<comment type="catalytic activity">
    <reaction evidence="1">
        <text>Exolytic cleavage of the (1-&gt;4)-beta-glycosidic linkage between N-acetylmuramic acid (MurNAc) and N-acetylglucosamine (GlcNAc) residues in peptidoglycan, from either the reducing or the non-reducing ends of the peptidoglycan chains, with concomitant formation of a 1,6-anhydrobond in the MurNAc residue.</text>
        <dbReference type="EC" id="4.2.2.n1"/>
    </reaction>
</comment>
<comment type="subcellular location">
    <subcellularLocation>
        <location>Cell outer membrane</location>
        <topology>Peripheral membrane protein</topology>
    </subcellularLocation>
    <text evidence="1">Attached to the inner leaflet of the outer membrane.</text>
</comment>
<comment type="domain">
    <text evidence="1">The N-terminal domain does not have lytic activity and probably modulates enzymatic activity. The C-terminal domain is the catalytic active domain.</text>
</comment>
<comment type="similarity">
    <text evidence="1">In the N-terminal section; belongs to the bacterial solute-binding protein 3 family.</text>
</comment>
<comment type="similarity">
    <text evidence="1">In the C-terminal section; belongs to the transglycosylase Slt family.</text>
</comment>
<sequence length="479" mass="54808">MKRLLLVLCYITLLAGCQKVVVEQEKTTPPLKPTQLIVGTLYGPQIYFTSGQGDSGYDYEMAERFANYLDLELKMKPFANISELYSAMHSGEIDIIAAGLADTPARREQFRLGPPLYRVNQVLVYRQGTPIPRSVDTLKGEITVTTDSSFVDTLTELQKSNPDLVWNQEKDKDAEELLTMIAAGEIPYTIADSTSLDINRRFMPELREGLVLKRKQPVVWLLPPTNSDKLMSELLSFWHIEKRSGTLAHLNEKYFAHVERFDYVDTRAFIRAIDNKLPKYQATFEKYAEGIDWRKLAATAYQESHWNPNARSPTGVRGLMMLTLPTAKQVGIKNRLDPYQSIKGGAKYLNSMLERLPDSIPESQRMWFALASYNIGLGHVEDARKLAQSQGLNPSAWRDVKSVLPLLQKRKYYQKTRYGYARGNEAVHYVDSIRRYYDTLVWIDNQNMLLELKQKPLQTAEAKETEEKPQTDAIQPQQP</sequence>
<reference key="1">
    <citation type="submission" date="2007-10" db="EMBL/GenBank/DDBJ databases">
        <title>Complete sequence of Shewanella pealeana ATCC 700345.</title>
        <authorList>
            <consortium name="US DOE Joint Genome Institute"/>
            <person name="Copeland A."/>
            <person name="Lucas S."/>
            <person name="Lapidus A."/>
            <person name="Barry K."/>
            <person name="Glavina del Rio T."/>
            <person name="Dalin E."/>
            <person name="Tice H."/>
            <person name="Pitluck S."/>
            <person name="Chertkov O."/>
            <person name="Brettin T."/>
            <person name="Bruce D."/>
            <person name="Detter J.C."/>
            <person name="Han C."/>
            <person name="Schmutz J."/>
            <person name="Larimer F."/>
            <person name="Land M."/>
            <person name="Hauser L."/>
            <person name="Kyrpides N."/>
            <person name="Kim E."/>
            <person name="Zhao J.-S.Z."/>
            <person name="Manno D."/>
            <person name="Hawari J."/>
            <person name="Richardson P."/>
        </authorList>
    </citation>
    <scope>NUCLEOTIDE SEQUENCE [LARGE SCALE GENOMIC DNA]</scope>
    <source>
        <strain>ATCC 700345 / ANG-SQ1</strain>
    </source>
</reference>
<keyword id="KW-0998">Cell outer membrane</keyword>
<keyword id="KW-0961">Cell wall biogenesis/degradation</keyword>
<keyword id="KW-0456">Lyase</keyword>
<keyword id="KW-0472">Membrane</keyword>
<keyword id="KW-1185">Reference proteome</keyword>
<keyword id="KW-0732">Signal</keyword>
<feature type="signal peptide" evidence="1">
    <location>
        <begin position="1"/>
        <end position="15"/>
    </location>
</feature>
<feature type="chain" id="PRO_0000353980" description="Membrane-bound lytic murein transglycosylase F">
    <location>
        <begin position="16"/>
        <end position="479"/>
    </location>
</feature>
<feature type="region of interest" description="Non-LT domain" evidence="1">
    <location>
        <begin position="16"/>
        <end position="258"/>
    </location>
</feature>
<feature type="region of interest" description="LT domain" evidence="1">
    <location>
        <begin position="260"/>
        <end position="479"/>
    </location>
</feature>
<feature type="region of interest" description="Disordered" evidence="2">
    <location>
        <begin position="457"/>
        <end position="479"/>
    </location>
</feature>
<feature type="compositionally biased region" description="Basic and acidic residues" evidence="2">
    <location>
        <begin position="461"/>
        <end position="470"/>
    </location>
</feature>
<feature type="active site" evidence="1">
    <location>
        <position position="303"/>
    </location>
</feature>
<name>MLTF_SHEPA</name>
<dbReference type="EC" id="4.2.2.n1" evidence="1"/>
<dbReference type="EMBL" id="CP000851">
    <property type="protein sequence ID" value="ABV86643.1"/>
    <property type="molecule type" value="Genomic_DNA"/>
</dbReference>
<dbReference type="RefSeq" id="WP_012154569.1">
    <property type="nucleotide sequence ID" value="NC_009901.1"/>
</dbReference>
<dbReference type="SMR" id="A8H256"/>
<dbReference type="STRING" id="398579.Spea_1316"/>
<dbReference type="CAZy" id="GH23">
    <property type="family name" value="Glycoside Hydrolase Family 23"/>
</dbReference>
<dbReference type="KEGG" id="spl:Spea_1316"/>
<dbReference type="eggNOG" id="COG4623">
    <property type="taxonomic scope" value="Bacteria"/>
</dbReference>
<dbReference type="HOGENOM" id="CLU_027494_0_1_6"/>
<dbReference type="OrthoDB" id="9815002at2"/>
<dbReference type="Proteomes" id="UP000002608">
    <property type="component" value="Chromosome"/>
</dbReference>
<dbReference type="GO" id="GO:0009279">
    <property type="term" value="C:cell outer membrane"/>
    <property type="evidence" value="ECO:0007669"/>
    <property type="project" value="UniProtKB-SubCell"/>
</dbReference>
<dbReference type="GO" id="GO:0008933">
    <property type="term" value="F:peptidoglycan lytic transglycosylase activity"/>
    <property type="evidence" value="ECO:0007669"/>
    <property type="project" value="UniProtKB-UniRule"/>
</dbReference>
<dbReference type="GO" id="GO:0016998">
    <property type="term" value="P:cell wall macromolecule catabolic process"/>
    <property type="evidence" value="ECO:0007669"/>
    <property type="project" value="UniProtKB-UniRule"/>
</dbReference>
<dbReference type="GO" id="GO:0071555">
    <property type="term" value="P:cell wall organization"/>
    <property type="evidence" value="ECO:0007669"/>
    <property type="project" value="UniProtKB-KW"/>
</dbReference>
<dbReference type="GO" id="GO:0009253">
    <property type="term" value="P:peptidoglycan catabolic process"/>
    <property type="evidence" value="ECO:0007669"/>
    <property type="project" value="TreeGrafter"/>
</dbReference>
<dbReference type="CDD" id="cd13403">
    <property type="entry name" value="MLTF-like"/>
    <property type="match status" value="1"/>
</dbReference>
<dbReference type="CDD" id="cd01009">
    <property type="entry name" value="PBP2_YfhD_N"/>
    <property type="match status" value="1"/>
</dbReference>
<dbReference type="FunFam" id="1.10.530.10:FF:000003">
    <property type="entry name" value="Membrane-bound lytic murein transglycosylase F"/>
    <property type="match status" value="1"/>
</dbReference>
<dbReference type="Gene3D" id="1.10.530.10">
    <property type="match status" value="1"/>
</dbReference>
<dbReference type="Gene3D" id="3.40.190.10">
    <property type="entry name" value="Periplasmic binding protein-like II"/>
    <property type="match status" value="2"/>
</dbReference>
<dbReference type="HAMAP" id="MF_02016">
    <property type="entry name" value="MltF"/>
    <property type="match status" value="1"/>
</dbReference>
<dbReference type="InterPro" id="IPR023346">
    <property type="entry name" value="Lysozyme-like_dom_sf"/>
</dbReference>
<dbReference type="InterPro" id="IPR023703">
    <property type="entry name" value="MltF"/>
</dbReference>
<dbReference type="InterPro" id="IPR001638">
    <property type="entry name" value="Solute-binding_3/MltF_N"/>
</dbReference>
<dbReference type="InterPro" id="IPR008258">
    <property type="entry name" value="Transglycosylase_SLT_dom_1"/>
</dbReference>
<dbReference type="NCBIfam" id="NF008112">
    <property type="entry name" value="PRK10859.1"/>
    <property type="match status" value="1"/>
</dbReference>
<dbReference type="PANTHER" id="PTHR35936">
    <property type="entry name" value="MEMBRANE-BOUND LYTIC MUREIN TRANSGLYCOSYLASE F"/>
    <property type="match status" value="1"/>
</dbReference>
<dbReference type="PANTHER" id="PTHR35936:SF32">
    <property type="entry name" value="MEMBRANE-BOUND LYTIC MUREIN TRANSGLYCOSYLASE F"/>
    <property type="match status" value="1"/>
</dbReference>
<dbReference type="Pfam" id="PF00497">
    <property type="entry name" value="SBP_bac_3"/>
    <property type="match status" value="1"/>
</dbReference>
<dbReference type="Pfam" id="PF01464">
    <property type="entry name" value="SLT"/>
    <property type="match status" value="1"/>
</dbReference>
<dbReference type="SMART" id="SM00062">
    <property type="entry name" value="PBPb"/>
    <property type="match status" value="1"/>
</dbReference>
<dbReference type="SUPFAM" id="SSF53955">
    <property type="entry name" value="Lysozyme-like"/>
    <property type="match status" value="1"/>
</dbReference>
<dbReference type="SUPFAM" id="SSF53850">
    <property type="entry name" value="Periplasmic binding protein-like II"/>
    <property type="match status" value="1"/>
</dbReference>
<dbReference type="PROSITE" id="PS51257">
    <property type="entry name" value="PROKAR_LIPOPROTEIN"/>
    <property type="match status" value="1"/>
</dbReference>
<protein>
    <recommendedName>
        <fullName evidence="1">Membrane-bound lytic murein transglycosylase F</fullName>
        <ecNumber evidence="1">4.2.2.n1</ecNumber>
    </recommendedName>
    <alternativeName>
        <fullName evidence="1">Murein lyase F</fullName>
    </alternativeName>
</protein>
<gene>
    <name evidence="1" type="primary">mltF</name>
    <name type="ordered locus">Spea_1316</name>
</gene>
<accession>A8H256</accession>